<dbReference type="EMBL" id="BX950851">
    <property type="protein sequence ID" value="CAG76918.1"/>
    <property type="molecule type" value="Genomic_DNA"/>
</dbReference>
<dbReference type="RefSeq" id="WP_000613954.1">
    <property type="nucleotide sequence ID" value="NC_004547.2"/>
</dbReference>
<dbReference type="SMR" id="Q6CZY0"/>
<dbReference type="STRING" id="218491.ECA4021"/>
<dbReference type="GeneID" id="98390432"/>
<dbReference type="KEGG" id="eca:ECA4021"/>
<dbReference type="eggNOG" id="COG0093">
    <property type="taxonomic scope" value="Bacteria"/>
</dbReference>
<dbReference type="HOGENOM" id="CLU_095071_2_1_6"/>
<dbReference type="OrthoDB" id="9806379at2"/>
<dbReference type="Proteomes" id="UP000007966">
    <property type="component" value="Chromosome"/>
</dbReference>
<dbReference type="GO" id="GO:0022625">
    <property type="term" value="C:cytosolic large ribosomal subunit"/>
    <property type="evidence" value="ECO:0007669"/>
    <property type="project" value="TreeGrafter"/>
</dbReference>
<dbReference type="GO" id="GO:0070180">
    <property type="term" value="F:large ribosomal subunit rRNA binding"/>
    <property type="evidence" value="ECO:0007669"/>
    <property type="project" value="TreeGrafter"/>
</dbReference>
<dbReference type="GO" id="GO:0003735">
    <property type="term" value="F:structural constituent of ribosome"/>
    <property type="evidence" value="ECO:0007669"/>
    <property type="project" value="InterPro"/>
</dbReference>
<dbReference type="GO" id="GO:0006412">
    <property type="term" value="P:translation"/>
    <property type="evidence" value="ECO:0007669"/>
    <property type="project" value="UniProtKB-UniRule"/>
</dbReference>
<dbReference type="CDD" id="cd00337">
    <property type="entry name" value="Ribosomal_uL14"/>
    <property type="match status" value="1"/>
</dbReference>
<dbReference type="FunFam" id="2.40.150.20:FF:000001">
    <property type="entry name" value="50S ribosomal protein L14"/>
    <property type="match status" value="1"/>
</dbReference>
<dbReference type="Gene3D" id="2.40.150.20">
    <property type="entry name" value="Ribosomal protein L14"/>
    <property type="match status" value="1"/>
</dbReference>
<dbReference type="HAMAP" id="MF_01367">
    <property type="entry name" value="Ribosomal_uL14"/>
    <property type="match status" value="1"/>
</dbReference>
<dbReference type="InterPro" id="IPR000218">
    <property type="entry name" value="Ribosomal_uL14"/>
</dbReference>
<dbReference type="InterPro" id="IPR005745">
    <property type="entry name" value="Ribosomal_uL14_bac-type"/>
</dbReference>
<dbReference type="InterPro" id="IPR019972">
    <property type="entry name" value="Ribosomal_uL14_CS"/>
</dbReference>
<dbReference type="InterPro" id="IPR036853">
    <property type="entry name" value="Ribosomal_uL14_sf"/>
</dbReference>
<dbReference type="NCBIfam" id="TIGR01067">
    <property type="entry name" value="rplN_bact"/>
    <property type="match status" value="1"/>
</dbReference>
<dbReference type="PANTHER" id="PTHR11761">
    <property type="entry name" value="50S/60S RIBOSOMAL PROTEIN L14/L23"/>
    <property type="match status" value="1"/>
</dbReference>
<dbReference type="PANTHER" id="PTHR11761:SF3">
    <property type="entry name" value="LARGE RIBOSOMAL SUBUNIT PROTEIN UL14M"/>
    <property type="match status" value="1"/>
</dbReference>
<dbReference type="Pfam" id="PF00238">
    <property type="entry name" value="Ribosomal_L14"/>
    <property type="match status" value="1"/>
</dbReference>
<dbReference type="SMART" id="SM01374">
    <property type="entry name" value="Ribosomal_L14"/>
    <property type="match status" value="1"/>
</dbReference>
<dbReference type="SUPFAM" id="SSF50193">
    <property type="entry name" value="Ribosomal protein L14"/>
    <property type="match status" value="1"/>
</dbReference>
<dbReference type="PROSITE" id="PS00049">
    <property type="entry name" value="RIBOSOMAL_L14"/>
    <property type="match status" value="1"/>
</dbReference>
<accession>Q6CZY0</accession>
<name>RL14_PECAS</name>
<organism>
    <name type="scientific">Pectobacterium atrosepticum (strain SCRI 1043 / ATCC BAA-672)</name>
    <name type="common">Erwinia carotovora subsp. atroseptica</name>
    <dbReference type="NCBI Taxonomy" id="218491"/>
    <lineage>
        <taxon>Bacteria</taxon>
        <taxon>Pseudomonadati</taxon>
        <taxon>Pseudomonadota</taxon>
        <taxon>Gammaproteobacteria</taxon>
        <taxon>Enterobacterales</taxon>
        <taxon>Pectobacteriaceae</taxon>
        <taxon>Pectobacterium</taxon>
    </lineage>
</organism>
<sequence>MIQEQTMLNVADNSGARRVMCIKVLGGSHRRYAGVGDIIKITIKEAIPRGKVKKGDVLKAVVVRTKKGVRRPDGSVIRFDGNACVILNNNSEQPIGTRIFGPVTRELRNEKFMKIISLAPEVL</sequence>
<reference key="1">
    <citation type="journal article" date="2004" name="Proc. Natl. Acad. Sci. U.S.A.">
        <title>Genome sequence of the enterobacterial phytopathogen Erwinia carotovora subsp. atroseptica and characterization of virulence factors.</title>
        <authorList>
            <person name="Bell K.S."/>
            <person name="Sebaihia M."/>
            <person name="Pritchard L."/>
            <person name="Holden M.T.G."/>
            <person name="Hyman L.J."/>
            <person name="Holeva M.C."/>
            <person name="Thomson N.R."/>
            <person name="Bentley S.D."/>
            <person name="Churcher L.J.C."/>
            <person name="Mungall K."/>
            <person name="Atkin R."/>
            <person name="Bason N."/>
            <person name="Brooks K."/>
            <person name="Chillingworth T."/>
            <person name="Clark K."/>
            <person name="Doggett J."/>
            <person name="Fraser A."/>
            <person name="Hance Z."/>
            <person name="Hauser H."/>
            <person name="Jagels K."/>
            <person name="Moule S."/>
            <person name="Norbertczak H."/>
            <person name="Ormond D."/>
            <person name="Price C."/>
            <person name="Quail M.A."/>
            <person name="Sanders M."/>
            <person name="Walker D."/>
            <person name="Whitehead S."/>
            <person name="Salmond G.P.C."/>
            <person name="Birch P.R.J."/>
            <person name="Parkhill J."/>
            <person name="Toth I.K."/>
        </authorList>
    </citation>
    <scope>NUCLEOTIDE SEQUENCE [LARGE SCALE GENOMIC DNA]</scope>
    <source>
        <strain>SCRI 1043 / ATCC BAA-672</strain>
    </source>
</reference>
<keyword id="KW-1185">Reference proteome</keyword>
<keyword id="KW-0687">Ribonucleoprotein</keyword>
<keyword id="KW-0689">Ribosomal protein</keyword>
<keyword id="KW-0694">RNA-binding</keyword>
<keyword id="KW-0699">rRNA-binding</keyword>
<proteinExistence type="inferred from homology"/>
<evidence type="ECO:0000255" key="1">
    <source>
        <dbReference type="HAMAP-Rule" id="MF_01367"/>
    </source>
</evidence>
<evidence type="ECO:0000305" key="2"/>
<comment type="function">
    <text evidence="1">Binds to 23S rRNA. Forms part of two intersubunit bridges in the 70S ribosome.</text>
</comment>
<comment type="subunit">
    <text evidence="1">Part of the 50S ribosomal subunit. Forms a cluster with proteins L3 and L19. In the 70S ribosome, L14 and L19 interact and together make contacts with the 16S rRNA in bridges B5 and B8.</text>
</comment>
<comment type="similarity">
    <text evidence="1">Belongs to the universal ribosomal protein uL14 family.</text>
</comment>
<gene>
    <name evidence="1" type="primary">rplN</name>
    <name type="ordered locus">ECA4021</name>
</gene>
<feature type="chain" id="PRO_0000266480" description="Large ribosomal subunit protein uL14">
    <location>
        <begin position="1"/>
        <end position="123"/>
    </location>
</feature>
<protein>
    <recommendedName>
        <fullName evidence="1">Large ribosomal subunit protein uL14</fullName>
    </recommendedName>
    <alternativeName>
        <fullName evidence="2">50S ribosomal protein L14</fullName>
    </alternativeName>
</protein>